<gene>
    <name type="primary">skap1</name>
</gene>
<protein>
    <recommendedName>
        <fullName>Src kinase-associated phosphoprotein 1</fullName>
    </recommendedName>
</protein>
<organism>
    <name type="scientific">Xenopus tropicalis</name>
    <name type="common">Western clawed frog</name>
    <name type="synonym">Silurana tropicalis</name>
    <dbReference type="NCBI Taxonomy" id="8364"/>
    <lineage>
        <taxon>Eukaryota</taxon>
        <taxon>Metazoa</taxon>
        <taxon>Chordata</taxon>
        <taxon>Craniata</taxon>
        <taxon>Vertebrata</taxon>
        <taxon>Euteleostomi</taxon>
        <taxon>Amphibia</taxon>
        <taxon>Batrachia</taxon>
        <taxon>Anura</taxon>
        <taxon>Pipoidea</taxon>
        <taxon>Pipidae</taxon>
        <taxon>Xenopodinae</taxon>
        <taxon>Xenopus</taxon>
        <taxon>Silurana</taxon>
    </lineage>
</organism>
<sequence length="345" mass="39737">MQGYDIPRDVISLLKDAETYLAECLQNEKLSGRAREQRDEILHSFGQIRNRYGVEFALKGGEAAFTHTGQDDYDDIHNASYAPSQASDEVSVASDYVENDSEVEEELDKIFKQGYLERRKKDHGFFGSEWQKRWCVLTTRAFLYYSSEKGKQPKNGFLIKDSLAQMMPYIRKDSRRDSCFEVVTPNQQVFQFTAASPSDARDWVEQIQFLVKDTQSTIIPYEDDEETYDDIESTESSPVVGLTNDSENSLQEDDVYESIPGDEETEESEDENYEMKPGEPVIFYGDYYQGLWNCFSDNSDELSFERGDLIHILSKEYHAYGWWVGELDGIVGIVPKDYLTLAFDL</sequence>
<proteinExistence type="evidence at transcript level"/>
<dbReference type="EMBL" id="BC075553">
    <property type="protein sequence ID" value="AAH75553.1"/>
    <property type="molecule type" value="mRNA"/>
</dbReference>
<dbReference type="RefSeq" id="NP_001004990.1">
    <property type="nucleotide sequence ID" value="NM_001004990.1"/>
</dbReference>
<dbReference type="SMR" id="Q6DII7"/>
<dbReference type="FunCoup" id="Q6DII7">
    <property type="interactions" value="965"/>
</dbReference>
<dbReference type="STRING" id="8364.ENSXETP00000050746"/>
<dbReference type="PaxDb" id="8364-ENSXETP00000057091"/>
<dbReference type="DNASU" id="448448"/>
<dbReference type="GeneID" id="448448"/>
<dbReference type="KEGG" id="xtr:448448"/>
<dbReference type="AGR" id="Xenbase:XB-GENE-490220"/>
<dbReference type="CTD" id="8631"/>
<dbReference type="Xenbase" id="XB-GENE-490220">
    <property type="gene designation" value="skap1"/>
</dbReference>
<dbReference type="eggNOG" id="ENOG502QSSU">
    <property type="taxonomic scope" value="Eukaryota"/>
</dbReference>
<dbReference type="InParanoid" id="Q6DII7"/>
<dbReference type="OrthoDB" id="243840at2759"/>
<dbReference type="Proteomes" id="UP000008143">
    <property type="component" value="Chromosome 10"/>
</dbReference>
<dbReference type="GO" id="GO:0005737">
    <property type="term" value="C:cytoplasm"/>
    <property type="evidence" value="ECO:0007669"/>
    <property type="project" value="UniProtKB-SubCell"/>
</dbReference>
<dbReference type="GO" id="GO:0005634">
    <property type="term" value="C:nucleus"/>
    <property type="evidence" value="ECO:0007669"/>
    <property type="project" value="UniProtKB-SubCell"/>
</dbReference>
<dbReference type="GO" id="GO:0005886">
    <property type="term" value="C:plasma membrane"/>
    <property type="evidence" value="ECO:0007669"/>
    <property type="project" value="UniProtKB-SubCell"/>
</dbReference>
<dbReference type="GO" id="GO:0002250">
    <property type="term" value="P:adaptive immune response"/>
    <property type="evidence" value="ECO:0007669"/>
    <property type="project" value="UniProtKB-KW"/>
</dbReference>
<dbReference type="CDD" id="cd13380">
    <property type="entry name" value="PH_Skap1"/>
    <property type="match status" value="1"/>
</dbReference>
<dbReference type="FunFam" id="2.30.30.40:FF:000097">
    <property type="entry name" value="Putative src kinase-associated phosphoprotein 2"/>
    <property type="match status" value="1"/>
</dbReference>
<dbReference type="FunFam" id="2.30.29.30:FF:000791">
    <property type="entry name" value="Src kinase-associated phosphoprotein 1"/>
    <property type="match status" value="1"/>
</dbReference>
<dbReference type="Gene3D" id="6.10.250.220">
    <property type="match status" value="1"/>
</dbReference>
<dbReference type="Gene3D" id="2.30.29.30">
    <property type="entry name" value="Pleckstrin-homology domain (PH domain)/Phosphotyrosine-binding domain (PTB)"/>
    <property type="match status" value="1"/>
</dbReference>
<dbReference type="Gene3D" id="2.30.30.40">
    <property type="entry name" value="SH3 Domains"/>
    <property type="match status" value="1"/>
</dbReference>
<dbReference type="InterPro" id="IPR011993">
    <property type="entry name" value="PH-like_dom_sf"/>
</dbReference>
<dbReference type="InterPro" id="IPR001849">
    <property type="entry name" value="PH_domain"/>
</dbReference>
<dbReference type="InterPro" id="IPR036028">
    <property type="entry name" value="SH3-like_dom_sf"/>
</dbReference>
<dbReference type="InterPro" id="IPR001452">
    <property type="entry name" value="SH3_domain"/>
</dbReference>
<dbReference type="InterPro" id="IPR037781">
    <property type="entry name" value="SKAP_fam"/>
</dbReference>
<dbReference type="PANTHER" id="PTHR15129:SF1">
    <property type="entry name" value="SRC KINASE-ASSOCIATED PHOSPHOPROTEIN 1"/>
    <property type="match status" value="1"/>
</dbReference>
<dbReference type="PANTHER" id="PTHR15129">
    <property type="entry name" value="SRC-ASSOCIATED ADAPTOR PROTEIN"/>
    <property type="match status" value="1"/>
</dbReference>
<dbReference type="Pfam" id="PF00169">
    <property type="entry name" value="PH"/>
    <property type="match status" value="1"/>
</dbReference>
<dbReference type="Pfam" id="PF00018">
    <property type="entry name" value="SH3_1"/>
    <property type="match status" value="1"/>
</dbReference>
<dbReference type="PRINTS" id="PR00452">
    <property type="entry name" value="SH3DOMAIN"/>
</dbReference>
<dbReference type="SMART" id="SM00233">
    <property type="entry name" value="PH"/>
    <property type="match status" value="1"/>
</dbReference>
<dbReference type="SMART" id="SM00326">
    <property type="entry name" value="SH3"/>
    <property type="match status" value="1"/>
</dbReference>
<dbReference type="SUPFAM" id="SSF50729">
    <property type="entry name" value="PH domain-like"/>
    <property type="match status" value="1"/>
</dbReference>
<dbReference type="SUPFAM" id="SSF50044">
    <property type="entry name" value="SH3-domain"/>
    <property type="match status" value="1"/>
</dbReference>
<dbReference type="PROSITE" id="PS50003">
    <property type="entry name" value="PH_DOMAIN"/>
    <property type="match status" value="1"/>
</dbReference>
<dbReference type="PROSITE" id="PS50002">
    <property type="entry name" value="SH3"/>
    <property type="match status" value="1"/>
</dbReference>
<feature type="chain" id="PRO_0000270177" description="Src kinase-associated phosphoprotein 1">
    <location>
        <begin position="1"/>
        <end position="345"/>
    </location>
</feature>
<feature type="domain" description="PH" evidence="2">
    <location>
        <begin position="109"/>
        <end position="212"/>
    </location>
</feature>
<feature type="domain" description="SH3" evidence="3">
    <location>
        <begin position="283"/>
        <end position="344"/>
    </location>
</feature>
<feature type="region of interest" description="Disordered" evidence="4">
    <location>
        <begin position="226"/>
        <end position="274"/>
    </location>
</feature>
<feature type="compositionally biased region" description="Acidic residues" evidence="4">
    <location>
        <begin position="250"/>
        <end position="272"/>
    </location>
</feature>
<evidence type="ECO:0000250" key="1"/>
<evidence type="ECO:0000255" key="2">
    <source>
        <dbReference type="PROSITE-ProRule" id="PRU00145"/>
    </source>
</evidence>
<evidence type="ECO:0000255" key="3">
    <source>
        <dbReference type="PROSITE-ProRule" id="PRU00192"/>
    </source>
</evidence>
<evidence type="ECO:0000256" key="4">
    <source>
        <dbReference type="SAM" id="MobiDB-lite"/>
    </source>
</evidence>
<evidence type="ECO:0000305" key="5"/>
<comment type="function">
    <text evidence="1">Positively regulates T-cell receptor signaling. Required for optimal conjugation between T-cells and antigen-presenting cells (By similarity).</text>
</comment>
<comment type="subunit">
    <text evidence="1">Homodimer.</text>
</comment>
<comment type="subcellular location">
    <subcellularLocation>
        <location evidence="1">Cytoplasm</location>
    </subcellularLocation>
    <subcellularLocation>
        <location evidence="1">Nucleus</location>
    </subcellularLocation>
    <subcellularLocation>
        <location evidence="1">Cell membrane</location>
    </subcellularLocation>
    <text evidence="1">Upon T-cell stimulation, translocates to lipid rafts at the cell membrane.</text>
</comment>
<comment type="PTM">
    <text evidence="1">Phosphorylated on tyrosines.</text>
</comment>
<comment type="similarity">
    <text evidence="5">Belongs to the SKAP family.</text>
</comment>
<name>SKAP1_XENTR</name>
<accession>Q6DII7</accession>
<reference key="1">
    <citation type="submission" date="2004-06" db="EMBL/GenBank/DDBJ databases">
        <authorList>
            <consortium name="NIH - Xenopus Gene Collection (XGC) project"/>
        </authorList>
    </citation>
    <scope>NUCLEOTIDE SEQUENCE [LARGE SCALE MRNA]</scope>
    <source>
        <tissue>Embryo</tissue>
    </source>
</reference>
<keyword id="KW-1064">Adaptive immunity</keyword>
<keyword id="KW-1003">Cell membrane</keyword>
<keyword id="KW-0963">Cytoplasm</keyword>
<keyword id="KW-0391">Immunity</keyword>
<keyword id="KW-0472">Membrane</keyword>
<keyword id="KW-0539">Nucleus</keyword>
<keyword id="KW-0597">Phosphoprotein</keyword>
<keyword id="KW-1185">Reference proteome</keyword>
<keyword id="KW-0728">SH3 domain</keyword>